<gene>
    <name evidence="1" type="primary">trpA</name>
    <name type="ordered locus">XOO3251</name>
</gene>
<name>TRPA_XANOR</name>
<feature type="chain" id="PRO_0000098877" description="Tryptophan synthase alpha chain">
    <location>
        <begin position="1"/>
        <end position="268"/>
    </location>
</feature>
<feature type="active site" description="Proton acceptor" evidence="1">
    <location>
        <position position="49"/>
    </location>
</feature>
<feature type="active site" description="Proton acceptor" evidence="1">
    <location>
        <position position="60"/>
    </location>
</feature>
<accession>Q5GXR6</accession>
<dbReference type="EC" id="4.2.1.20" evidence="1"/>
<dbReference type="EMBL" id="AE013598">
    <property type="protein sequence ID" value="AAW76505.1"/>
    <property type="status" value="ALT_INIT"/>
    <property type="molecule type" value="Genomic_DNA"/>
</dbReference>
<dbReference type="SMR" id="Q5GXR6"/>
<dbReference type="STRING" id="291331.XOO3251"/>
<dbReference type="KEGG" id="xoo:XOO3251"/>
<dbReference type="HOGENOM" id="CLU_016734_0_4_6"/>
<dbReference type="UniPathway" id="UPA00035">
    <property type="reaction ID" value="UER00044"/>
</dbReference>
<dbReference type="Proteomes" id="UP000006735">
    <property type="component" value="Chromosome"/>
</dbReference>
<dbReference type="GO" id="GO:0005829">
    <property type="term" value="C:cytosol"/>
    <property type="evidence" value="ECO:0007669"/>
    <property type="project" value="TreeGrafter"/>
</dbReference>
<dbReference type="GO" id="GO:0004834">
    <property type="term" value="F:tryptophan synthase activity"/>
    <property type="evidence" value="ECO:0007669"/>
    <property type="project" value="UniProtKB-UniRule"/>
</dbReference>
<dbReference type="CDD" id="cd04724">
    <property type="entry name" value="Tryptophan_synthase_alpha"/>
    <property type="match status" value="1"/>
</dbReference>
<dbReference type="FunFam" id="3.20.20.70:FF:000037">
    <property type="entry name" value="Tryptophan synthase alpha chain"/>
    <property type="match status" value="1"/>
</dbReference>
<dbReference type="Gene3D" id="3.20.20.70">
    <property type="entry name" value="Aldolase class I"/>
    <property type="match status" value="1"/>
</dbReference>
<dbReference type="HAMAP" id="MF_00131">
    <property type="entry name" value="Trp_synth_alpha"/>
    <property type="match status" value="1"/>
</dbReference>
<dbReference type="InterPro" id="IPR013785">
    <property type="entry name" value="Aldolase_TIM"/>
</dbReference>
<dbReference type="InterPro" id="IPR011060">
    <property type="entry name" value="RibuloseP-bd_barrel"/>
</dbReference>
<dbReference type="InterPro" id="IPR018204">
    <property type="entry name" value="Trp_synthase_alpha_AS"/>
</dbReference>
<dbReference type="InterPro" id="IPR002028">
    <property type="entry name" value="Trp_synthase_suA"/>
</dbReference>
<dbReference type="NCBIfam" id="TIGR00262">
    <property type="entry name" value="trpA"/>
    <property type="match status" value="1"/>
</dbReference>
<dbReference type="PANTHER" id="PTHR43406:SF1">
    <property type="entry name" value="TRYPTOPHAN SYNTHASE ALPHA CHAIN, CHLOROPLASTIC"/>
    <property type="match status" value="1"/>
</dbReference>
<dbReference type="PANTHER" id="PTHR43406">
    <property type="entry name" value="TRYPTOPHAN SYNTHASE, ALPHA CHAIN"/>
    <property type="match status" value="1"/>
</dbReference>
<dbReference type="Pfam" id="PF00290">
    <property type="entry name" value="Trp_syntA"/>
    <property type="match status" value="1"/>
</dbReference>
<dbReference type="SUPFAM" id="SSF51366">
    <property type="entry name" value="Ribulose-phoshate binding barrel"/>
    <property type="match status" value="1"/>
</dbReference>
<dbReference type="PROSITE" id="PS00167">
    <property type="entry name" value="TRP_SYNTHASE_ALPHA"/>
    <property type="match status" value="1"/>
</dbReference>
<proteinExistence type="inferred from homology"/>
<comment type="function">
    <text evidence="1">The alpha subunit is responsible for the aldol cleavage of indoleglycerol phosphate to indole and glyceraldehyde 3-phosphate.</text>
</comment>
<comment type="catalytic activity">
    <reaction evidence="1">
        <text>(1S,2R)-1-C-(indol-3-yl)glycerol 3-phosphate + L-serine = D-glyceraldehyde 3-phosphate + L-tryptophan + H2O</text>
        <dbReference type="Rhea" id="RHEA:10532"/>
        <dbReference type="ChEBI" id="CHEBI:15377"/>
        <dbReference type="ChEBI" id="CHEBI:33384"/>
        <dbReference type="ChEBI" id="CHEBI:57912"/>
        <dbReference type="ChEBI" id="CHEBI:58866"/>
        <dbReference type="ChEBI" id="CHEBI:59776"/>
        <dbReference type="EC" id="4.2.1.20"/>
    </reaction>
</comment>
<comment type="pathway">
    <text evidence="1">Amino-acid biosynthesis; L-tryptophan biosynthesis; L-tryptophan from chorismate: step 5/5.</text>
</comment>
<comment type="subunit">
    <text evidence="1">Tetramer of two alpha and two beta chains.</text>
</comment>
<comment type="similarity">
    <text evidence="1">Belongs to the TrpA family.</text>
</comment>
<comment type="sequence caution" evidence="2">
    <conflict type="erroneous initiation">
        <sequence resource="EMBL-CDS" id="AAW76505"/>
    </conflict>
</comment>
<sequence>MRRIDFRFAELRANGRKALIPFITAGDPSLEATVPVMHALVRAGADVIELGVPFSDPMADGPTIQRSSERALGRGAGLAYVLEAVHEFRREDAATPVVLMGYLNPIEIHGTRRFAEAAVAAGVDGLLLVDLPPEEADETRAIFTEVGLALIALASPTTSEQRLDMLCSTAQGYLYYVSFAGVTGASNLLDTHAASDRLRQLRQRAGAPVVAGFGIKDAASAAAMAVDADGVVVGSALVAALAEADDVRSARERAEAFLAPLRQALDQA</sequence>
<evidence type="ECO:0000255" key="1">
    <source>
        <dbReference type="HAMAP-Rule" id="MF_00131"/>
    </source>
</evidence>
<evidence type="ECO:0000305" key="2"/>
<organism>
    <name type="scientific">Xanthomonas oryzae pv. oryzae (strain KACC10331 / KXO85)</name>
    <dbReference type="NCBI Taxonomy" id="291331"/>
    <lineage>
        <taxon>Bacteria</taxon>
        <taxon>Pseudomonadati</taxon>
        <taxon>Pseudomonadota</taxon>
        <taxon>Gammaproteobacteria</taxon>
        <taxon>Lysobacterales</taxon>
        <taxon>Lysobacteraceae</taxon>
        <taxon>Xanthomonas</taxon>
    </lineage>
</organism>
<reference key="1">
    <citation type="journal article" date="2005" name="Nucleic Acids Res.">
        <title>The genome sequence of Xanthomonas oryzae pathovar oryzae KACC10331, the bacterial blight pathogen of rice.</title>
        <authorList>
            <person name="Lee B.-M."/>
            <person name="Park Y.-J."/>
            <person name="Park D.-S."/>
            <person name="Kang H.-W."/>
            <person name="Kim J.-G."/>
            <person name="Song E.-S."/>
            <person name="Park I.-C."/>
            <person name="Yoon U.-H."/>
            <person name="Hahn J.-H."/>
            <person name="Koo B.-S."/>
            <person name="Lee G.-B."/>
            <person name="Kim H."/>
            <person name="Park H.-S."/>
            <person name="Yoon K.-O."/>
            <person name="Kim J.-H."/>
            <person name="Jung C.-H."/>
            <person name="Koh N.-H."/>
            <person name="Seo J.-S."/>
            <person name="Go S.-J."/>
        </authorList>
    </citation>
    <scope>NUCLEOTIDE SEQUENCE [LARGE SCALE GENOMIC DNA]</scope>
    <source>
        <strain>KACC10331 / KXO85</strain>
    </source>
</reference>
<keyword id="KW-0028">Amino-acid biosynthesis</keyword>
<keyword id="KW-0057">Aromatic amino acid biosynthesis</keyword>
<keyword id="KW-0456">Lyase</keyword>
<keyword id="KW-1185">Reference proteome</keyword>
<keyword id="KW-0822">Tryptophan biosynthesis</keyword>
<protein>
    <recommendedName>
        <fullName evidence="1">Tryptophan synthase alpha chain</fullName>
        <ecNumber evidence="1">4.2.1.20</ecNumber>
    </recommendedName>
</protein>